<sequence>MDIKTALSRIVGHLDLSTAEMSDVMREIMTGQCTDAQIGAFMMAMRMKSESIDEIVGAVSVMRELADKVELKTLDGVVDVVGTGGDGANIFNVSTASSFVVAAAGCTVAKHGNRAVSGKSGSADLLEAAGIYLNLTPVQVARCIDNVGIGFMFAQSHHGAMKHAAGPRKDLGLRTLFNMLGPLTNPAGVKHQVVGVFSQALCRPLAEVLQRMGSKHVLVVHSKDGLDEFSLAAPTFVAELKNDQITEYWVEPEDLGMKSQSLHGLAVESPAASLELIRDALGRRKTENGQKAAEMIVLNAGAALYAADHAYSLKEGVALAHDALHTGLAREKLEELGAFTAVFKMENEG</sequence>
<keyword id="KW-0028">Amino-acid biosynthesis</keyword>
<keyword id="KW-0057">Aromatic amino acid biosynthesis</keyword>
<keyword id="KW-0328">Glycosyltransferase</keyword>
<keyword id="KW-0460">Magnesium</keyword>
<keyword id="KW-0479">Metal-binding</keyword>
<keyword id="KW-0808">Transferase</keyword>
<keyword id="KW-0822">Tryptophan biosynthesis</keyword>
<protein>
    <recommendedName>
        <fullName evidence="1">Anthranilate phosphoribosyltransferase</fullName>
        <ecNumber evidence="1">2.4.2.18</ecNumber>
    </recommendedName>
</protein>
<name>TRPD_PSEFS</name>
<evidence type="ECO:0000255" key="1">
    <source>
        <dbReference type="HAMAP-Rule" id="MF_00211"/>
    </source>
</evidence>
<proteinExistence type="inferred from homology"/>
<organism>
    <name type="scientific">Pseudomonas fluorescens (strain SBW25)</name>
    <dbReference type="NCBI Taxonomy" id="216595"/>
    <lineage>
        <taxon>Bacteria</taxon>
        <taxon>Pseudomonadati</taxon>
        <taxon>Pseudomonadota</taxon>
        <taxon>Gammaproteobacteria</taxon>
        <taxon>Pseudomonadales</taxon>
        <taxon>Pseudomonadaceae</taxon>
        <taxon>Pseudomonas</taxon>
    </lineage>
</organism>
<reference key="1">
    <citation type="journal article" date="2009" name="Genome Biol.">
        <title>Genomic and genetic analyses of diversity and plant interactions of Pseudomonas fluorescens.</title>
        <authorList>
            <person name="Silby M.W."/>
            <person name="Cerdeno-Tarraga A.M."/>
            <person name="Vernikos G.S."/>
            <person name="Giddens S.R."/>
            <person name="Jackson R.W."/>
            <person name="Preston G.M."/>
            <person name="Zhang X.-X."/>
            <person name="Moon C.D."/>
            <person name="Gehrig S.M."/>
            <person name="Godfrey S.A.C."/>
            <person name="Knight C.G."/>
            <person name="Malone J.G."/>
            <person name="Robinson Z."/>
            <person name="Spiers A.J."/>
            <person name="Harris S."/>
            <person name="Challis G.L."/>
            <person name="Yaxley A.M."/>
            <person name="Harris D."/>
            <person name="Seeger K."/>
            <person name="Murphy L."/>
            <person name="Rutter S."/>
            <person name="Squares R."/>
            <person name="Quail M.A."/>
            <person name="Saunders E."/>
            <person name="Mavromatis K."/>
            <person name="Brettin T.S."/>
            <person name="Bentley S.D."/>
            <person name="Hothersall J."/>
            <person name="Stephens E."/>
            <person name="Thomas C.M."/>
            <person name="Parkhill J."/>
            <person name="Levy S.B."/>
            <person name="Rainey P.B."/>
            <person name="Thomson N.R."/>
        </authorList>
    </citation>
    <scope>NUCLEOTIDE SEQUENCE [LARGE SCALE GENOMIC DNA]</scope>
    <source>
        <strain>SBW25</strain>
    </source>
</reference>
<accession>C3K308</accession>
<feature type="chain" id="PRO_1000204188" description="Anthranilate phosphoribosyltransferase">
    <location>
        <begin position="1"/>
        <end position="349"/>
    </location>
</feature>
<feature type="binding site" evidence="1">
    <location>
        <position position="82"/>
    </location>
    <ligand>
        <name>5-phospho-alpha-D-ribose 1-diphosphate</name>
        <dbReference type="ChEBI" id="CHEBI:58017"/>
    </ligand>
</feature>
<feature type="binding site" evidence="1">
    <location>
        <position position="82"/>
    </location>
    <ligand>
        <name>anthranilate</name>
        <dbReference type="ChEBI" id="CHEBI:16567"/>
        <label>1</label>
    </ligand>
</feature>
<feature type="binding site" evidence="1">
    <location>
        <begin position="85"/>
        <end position="86"/>
    </location>
    <ligand>
        <name>5-phospho-alpha-D-ribose 1-diphosphate</name>
        <dbReference type="ChEBI" id="CHEBI:58017"/>
    </ligand>
</feature>
<feature type="binding site" evidence="1">
    <location>
        <begin position="92"/>
        <end position="95"/>
    </location>
    <ligand>
        <name>5-phospho-alpha-D-ribose 1-diphosphate</name>
        <dbReference type="ChEBI" id="CHEBI:58017"/>
    </ligand>
</feature>
<feature type="binding site" evidence="1">
    <location>
        <position position="94"/>
    </location>
    <ligand>
        <name>Mg(2+)</name>
        <dbReference type="ChEBI" id="CHEBI:18420"/>
        <label>1</label>
    </ligand>
</feature>
<feature type="binding site" evidence="1">
    <location>
        <begin position="110"/>
        <end position="118"/>
    </location>
    <ligand>
        <name>5-phospho-alpha-D-ribose 1-diphosphate</name>
        <dbReference type="ChEBI" id="CHEBI:58017"/>
    </ligand>
</feature>
<feature type="binding site" evidence="1">
    <location>
        <position position="113"/>
    </location>
    <ligand>
        <name>anthranilate</name>
        <dbReference type="ChEBI" id="CHEBI:16567"/>
        <label>1</label>
    </ligand>
</feature>
<feature type="binding site" evidence="1">
    <location>
        <position position="122"/>
    </location>
    <ligand>
        <name>5-phospho-alpha-D-ribose 1-diphosphate</name>
        <dbReference type="ChEBI" id="CHEBI:58017"/>
    </ligand>
</feature>
<feature type="binding site" evidence="1">
    <location>
        <position position="168"/>
    </location>
    <ligand>
        <name>anthranilate</name>
        <dbReference type="ChEBI" id="CHEBI:16567"/>
        <label>2</label>
    </ligand>
</feature>
<feature type="binding site" evidence="1">
    <location>
        <position position="227"/>
    </location>
    <ligand>
        <name>Mg(2+)</name>
        <dbReference type="ChEBI" id="CHEBI:18420"/>
        <label>2</label>
    </ligand>
</feature>
<feature type="binding site" evidence="1">
    <location>
        <position position="228"/>
    </location>
    <ligand>
        <name>Mg(2+)</name>
        <dbReference type="ChEBI" id="CHEBI:18420"/>
        <label>1</label>
    </ligand>
</feature>
<feature type="binding site" evidence="1">
    <location>
        <position position="228"/>
    </location>
    <ligand>
        <name>Mg(2+)</name>
        <dbReference type="ChEBI" id="CHEBI:18420"/>
        <label>2</label>
    </ligand>
</feature>
<comment type="function">
    <text evidence="1">Catalyzes the transfer of the phosphoribosyl group of 5-phosphorylribose-1-pyrophosphate (PRPP) to anthranilate to yield N-(5'-phosphoribosyl)-anthranilate (PRA).</text>
</comment>
<comment type="catalytic activity">
    <reaction evidence="1">
        <text>N-(5-phospho-beta-D-ribosyl)anthranilate + diphosphate = 5-phospho-alpha-D-ribose 1-diphosphate + anthranilate</text>
        <dbReference type="Rhea" id="RHEA:11768"/>
        <dbReference type="ChEBI" id="CHEBI:16567"/>
        <dbReference type="ChEBI" id="CHEBI:18277"/>
        <dbReference type="ChEBI" id="CHEBI:33019"/>
        <dbReference type="ChEBI" id="CHEBI:58017"/>
        <dbReference type="EC" id="2.4.2.18"/>
    </reaction>
</comment>
<comment type="cofactor">
    <cofactor evidence="1">
        <name>Mg(2+)</name>
        <dbReference type="ChEBI" id="CHEBI:18420"/>
    </cofactor>
    <text evidence="1">Binds 2 magnesium ions per monomer.</text>
</comment>
<comment type="pathway">
    <text evidence="1">Amino-acid biosynthesis; L-tryptophan biosynthesis; L-tryptophan from chorismate: step 2/5.</text>
</comment>
<comment type="subunit">
    <text evidence="1">Homodimer.</text>
</comment>
<comment type="similarity">
    <text evidence="1">Belongs to the anthranilate phosphoribosyltransferase family.</text>
</comment>
<dbReference type="EC" id="2.4.2.18" evidence="1"/>
<dbReference type="EMBL" id="AM181176">
    <property type="protein sequence ID" value="CAY52815.1"/>
    <property type="molecule type" value="Genomic_DNA"/>
</dbReference>
<dbReference type="RefSeq" id="WP_015886156.1">
    <property type="nucleotide sequence ID" value="NC_012660.1"/>
</dbReference>
<dbReference type="SMR" id="C3K308"/>
<dbReference type="STRING" id="294.SRM1_05217"/>
<dbReference type="GeneID" id="93467190"/>
<dbReference type="eggNOG" id="COG0547">
    <property type="taxonomic scope" value="Bacteria"/>
</dbReference>
<dbReference type="HOGENOM" id="CLU_034315_2_1_6"/>
<dbReference type="OrthoDB" id="9806430at2"/>
<dbReference type="UniPathway" id="UPA00035">
    <property type="reaction ID" value="UER00041"/>
</dbReference>
<dbReference type="GO" id="GO:0005829">
    <property type="term" value="C:cytosol"/>
    <property type="evidence" value="ECO:0007669"/>
    <property type="project" value="TreeGrafter"/>
</dbReference>
<dbReference type="GO" id="GO:0004048">
    <property type="term" value="F:anthranilate phosphoribosyltransferase activity"/>
    <property type="evidence" value="ECO:0007669"/>
    <property type="project" value="UniProtKB-UniRule"/>
</dbReference>
<dbReference type="GO" id="GO:0000287">
    <property type="term" value="F:magnesium ion binding"/>
    <property type="evidence" value="ECO:0007669"/>
    <property type="project" value="UniProtKB-UniRule"/>
</dbReference>
<dbReference type="GO" id="GO:0000162">
    <property type="term" value="P:L-tryptophan biosynthetic process"/>
    <property type="evidence" value="ECO:0007669"/>
    <property type="project" value="UniProtKB-UniRule"/>
</dbReference>
<dbReference type="FunFam" id="1.20.970.10:FF:000006">
    <property type="entry name" value="Anthranilate phosphoribosyltransferase"/>
    <property type="match status" value="1"/>
</dbReference>
<dbReference type="FunFam" id="3.40.1030.10:FF:000002">
    <property type="entry name" value="Anthranilate phosphoribosyltransferase"/>
    <property type="match status" value="1"/>
</dbReference>
<dbReference type="Gene3D" id="3.40.1030.10">
    <property type="entry name" value="Nucleoside phosphorylase/phosphoribosyltransferase catalytic domain"/>
    <property type="match status" value="1"/>
</dbReference>
<dbReference type="Gene3D" id="1.20.970.10">
    <property type="entry name" value="Transferase, Pyrimidine Nucleoside Phosphorylase, Chain C"/>
    <property type="match status" value="1"/>
</dbReference>
<dbReference type="HAMAP" id="MF_00211">
    <property type="entry name" value="TrpD"/>
    <property type="match status" value="1"/>
</dbReference>
<dbReference type="InterPro" id="IPR005940">
    <property type="entry name" value="Anthranilate_Pribosyl_Tfrase"/>
</dbReference>
<dbReference type="InterPro" id="IPR000312">
    <property type="entry name" value="Glycosyl_Trfase_fam3"/>
</dbReference>
<dbReference type="InterPro" id="IPR017459">
    <property type="entry name" value="Glycosyl_Trfase_fam3_N_dom"/>
</dbReference>
<dbReference type="InterPro" id="IPR036320">
    <property type="entry name" value="Glycosyl_Trfase_fam3_N_dom_sf"/>
</dbReference>
<dbReference type="InterPro" id="IPR035902">
    <property type="entry name" value="Nuc_phospho_transferase"/>
</dbReference>
<dbReference type="NCBIfam" id="TIGR01245">
    <property type="entry name" value="trpD"/>
    <property type="match status" value="1"/>
</dbReference>
<dbReference type="PANTHER" id="PTHR43285">
    <property type="entry name" value="ANTHRANILATE PHOSPHORIBOSYLTRANSFERASE"/>
    <property type="match status" value="1"/>
</dbReference>
<dbReference type="PANTHER" id="PTHR43285:SF2">
    <property type="entry name" value="ANTHRANILATE PHOSPHORIBOSYLTRANSFERASE"/>
    <property type="match status" value="1"/>
</dbReference>
<dbReference type="Pfam" id="PF02885">
    <property type="entry name" value="Glycos_trans_3N"/>
    <property type="match status" value="1"/>
</dbReference>
<dbReference type="Pfam" id="PF00591">
    <property type="entry name" value="Glycos_transf_3"/>
    <property type="match status" value="1"/>
</dbReference>
<dbReference type="SUPFAM" id="SSF52418">
    <property type="entry name" value="Nucleoside phosphorylase/phosphoribosyltransferase catalytic domain"/>
    <property type="match status" value="1"/>
</dbReference>
<dbReference type="SUPFAM" id="SSF47648">
    <property type="entry name" value="Nucleoside phosphorylase/phosphoribosyltransferase N-terminal domain"/>
    <property type="match status" value="1"/>
</dbReference>
<gene>
    <name evidence="1" type="primary">trpD</name>
    <name type="ordered locus">PFLU_5559</name>
</gene>